<sequence>MNAYEGDTLNNHGKSSTRQHWRKRSAVSSSLEFSSYEESNSPIENTEVLKVSEIEAKKRRRKKHRYIYLAVCLFFLASVLSCAIIFRFYLHTNRENFSLFKNDSYKQKEPITVSHFGESIFLPYHQDIEWITSTEGTVLYYDQSTFSLSLFYPDGKEYGSNVDSLITSFVLTCKNLHRKRYSSDMEYIAFSCSKDRRWRHSYYEDVYLVERATGRIEHLASDQSKKIVVAEWSPIGHKLVYGLGSNLFIWESFSEPPVCITDQSDLDGLFNGNSDWVYEEEILQSSKAVWWSPDGNCLSYLSIDDSKVPVHVLPFEQLDSKVEDQNRVNNFFHYSTPKDPIPFVKLFVNCFTDSGESIEVDSSFPLSTQHRYITDVAWAGNEKLMFVEVLRGNYERVTSLFDLSSRKTTIENTEVSEHPLALTSSLHLKYLSFESLGNLKERYVRQYFLSNKKRIAIYELDNPVPIYLTPVNISFLSDLYLINNTLYFTAISSGSPFSRVYRLCTKSLILSEINIQIGSGLFGIKVSNDQNYLLVNYLGPEIPKQFIYSIHEDKVSTSNDHSKNNLPSDSSSTSLGKVKLELCNSLETNEELIITKEKFAFPSVFFKVIKVKNITAYIQEIRPPNFNPRKRYPTVFHLYGAPQSALVTGKYEMDINELMASVYNFLVIKVDIVDISDVSGQHLFSDSHELIIKSWIELLRSYVDTPYIDRHRVGIWGWSFGGYLTLKILENADFIKTGAVVAPVTDWRYYDAYYSENLLGAYSKQTTAIYDKTAVHYSENFRKLCGLLVLHGTSDDNVHIENTMQLTKAMVEKGVYNYYPFIVPNANHEFSDPTDYTFLREKLSGHFHHALYC</sequence>
<organism>
    <name type="scientific">Schizosaccharomyces pombe (strain 972 / ATCC 24843)</name>
    <name type="common">Fission yeast</name>
    <dbReference type="NCBI Taxonomy" id="284812"/>
    <lineage>
        <taxon>Eukaryota</taxon>
        <taxon>Fungi</taxon>
        <taxon>Dikarya</taxon>
        <taxon>Ascomycota</taxon>
        <taxon>Taphrinomycotina</taxon>
        <taxon>Schizosaccharomycetes</taxon>
        <taxon>Schizosaccharomycetales</taxon>
        <taxon>Schizosaccharomycetaceae</taxon>
        <taxon>Schizosaccharomyces</taxon>
    </lineage>
</organism>
<comment type="subcellular location">
    <subcellularLocation>
        <location>Vacuole membrane</location>
        <topology>Single-pass type II membrane protein</topology>
    </subcellularLocation>
    <text>Lysosome-like vacuoles.</text>
</comment>
<comment type="similarity">
    <text evidence="4">Belongs to the peptidase S9B family.</text>
</comment>
<dbReference type="EC" id="3.4.14.-"/>
<dbReference type="EMBL" id="CU329670">
    <property type="protein sequence ID" value="CAB11208.2"/>
    <property type="molecule type" value="Genomic_DNA"/>
</dbReference>
<dbReference type="PIR" id="T37700">
    <property type="entry name" value="T37700"/>
</dbReference>
<dbReference type="RefSeq" id="NP_594920.2">
    <property type="nucleotide sequence ID" value="NM_001020352.2"/>
</dbReference>
<dbReference type="SMR" id="Q9P7E9"/>
<dbReference type="BioGRID" id="278581">
    <property type="interactions" value="6"/>
</dbReference>
<dbReference type="FunCoup" id="Q9P7E9">
    <property type="interactions" value="66"/>
</dbReference>
<dbReference type="STRING" id="284812.Q9P7E9"/>
<dbReference type="ESTHER" id="schpo-C14C4.15C">
    <property type="family name" value="DPP4N_Peptidase_S9"/>
</dbReference>
<dbReference type="MEROPS" id="S09.A93"/>
<dbReference type="PaxDb" id="4896-SPAC14C4.15c.1"/>
<dbReference type="EnsemblFungi" id="SPAC14C4.15c.1">
    <property type="protein sequence ID" value="SPAC14C4.15c.1:pep"/>
    <property type="gene ID" value="SPAC14C4.15c"/>
</dbReference>
<dbReference type="GeneID" id="2542105"/>
<dbReference type="KEGG" id="spo:2542105"/>
<dbReference type="PomBase" id="SPAC14C4.15c"/>
<dbReference type="VEuPathDB" id="FungiDB:SPAC14C4.15c"/>
<dbReference type="eggNOG" id="KOG2100">
    <property type="taxonomic scope" value="Eukaryota"/>
</dbReference>
<dbReference type="HOGENOM" id="CLU_334677_0_0_1"/>
<dbReference type="InParanoid" id="Q9P7E9"/>
<dbReference type="OMA" id="IRWKSYN"/>
<dbReference type="PhylomeDB" id="Q9P7E9"/>
<dbReference type="Reactome" id="R-SPO-381771">
    <property type="pathway name" value="Synthesis, secretion, and inactivation of Glucagon-like Peptide-1 (GLP-1)"/>
</dbReference>
<dbReference type="PRO" id="PR:Q9P7E9"/>
<dbReference type="Proteomes" id="UP000002485">
    <property type="component" value="Chromosome I"/>
</dbReference>
<dbReference type="GO" id="GO:0000329">
    <property type="term" value="C:fungal-type vacuole membrane"/>
    <property type="evidence" value="ECO:0000266"/>
    <property type="project" value="PomBase"/>
</dbReference>
<dbReference type="GO" id="GO:0005886">
    <property type="term" value="C:plasma membrane"/>
    <property type="evidence" value="ECO:0000318"/>
    <property type="project" value="GO_Central"/>
</dbReference>
<dbReference type="GO" id="GO:0004177">
    <property type="term" value="F:aminopeptidase activity"/>
    <property type="evidence" value="ECO:0007669"/>
    <property type="project" value="UniProtKB-KW"/>
</dbReference>
<dbReference type="GO" id="GO:0008239">
    <property type="term" value="F:dipeptidyl-peptidase activity"/>
    <property type="evidence" value="ECO:0000318"/>
    <property type="project" value="GO_Central"/>
</dbReference>
<dbReference type="GO" id="GO:0008236">
    <property type="term" value="F:serine-type peptidase activity"/>
    <property type="evidence" value="ECO:0007669"/>
    <property type="project" value="UniProtKB-KW"/>
</dbReference>
<dbReference type="GO" id="GO:0016485">
    <property type="term" value="P:protein processing"/>
    <property type="evidence" value="ECO:0000266"/>
    <property type="project" value="PomBase"/>
</dbReference>
<dbReference type="GO" id="GO:0006508">
    <property type="term" value="P:proteolysis"/>
    <property type="evidence" value="ECO:0000318"/>
    <property type="project" value="GO_Central"/>
</dbReference>
<dbReference type="FunFam" id="3.40.50.1820:FF:000003">
    <property type="entry name" value="Dipeptidyl peptidase 4"/>
    <property type="match status" value="1"/>
</dbReference>
<dbReference type="Gene3D" id="3.40.50.1820">
    <property type="entry name" value="alpha/beta hydrolase"/>
    <property type="match status" value="1"/>
</dbReference>
<dbReference type="Gene3D" id="2.140.10.30">
    <property type="entry name" value="Dipeptidylpeptidase IV, N-terminal domain"/>
    <property type="match status" value="1"/>
</dbReference>
<dbReference type="InterPro" id="IPR029058">
    <property type="entry name" value="AB_hydrolase_fold"/>
</dbReference>
<dbReference type="InterPro" id="IPR001375">
    <property type="entry name" value="Peptidase_S9_cat"/>
</dbReference>
<dbReference type="InterPro" id="IPR002469">
    <property type="entry name" value="Peptidase_S9B_N"/>
</dbReference>
<dbReference type="InterPro" id="IPR050278">
    <property type="entry name" value="Serine_Prot_S9B/DPPIV"/>
</dbReference>
<dbReference type="PANTHER" id="PTHR11731:SF200">
    <property type="entry name" value="DIPEPTIDYL PEPTIDASE 10, ISOFORM B"/>
    <property type="match status" value="1"/>
</dbReference>
<dbReference type="PANTHER" id="PTHR11731">
    <property type="entry name" value="PROTEASE FAMILY S9B,C DIPEPTIDYL-PEPTIDASE IV-RELATED"/>
    <property type="match status" value="1"/>
</dbReference>
<dbReference type="Pfam" id="PF00930">
    <property type="entry name" value="DPPIV_N"/>
    <property type="match status" value="1"/>
</dbReference>
<dbReference type="Pfam" id="PF00326">
    <property type="entry name" value="Peptidase_S9"/>
    <property type="match status" value="1"/>
</dbReference>
<dbReference type="SUPFAM" id="SSF53474">
    <property type="entry name" value="alpha/beta-Hydrolases"/>
    <property type="match status" value="1"/>
</dbReference>
<dbReference type="SUPFAM" id="SSF82171">
    <property type="entry name" value="DPP6 N-terminal domain-like"/>
    <property type="match status" value="1"/>
</dbReference>
<evidence type="ECO:0000250" key="1"/>
<evidence type="ECO:0000255" key="2"/>
<evidence type="ECO:0000256" key="3">
    <source>
        <dbReference type="SAM" id="MobiDB-lite"/>
    </source>
</evidence>
<evidence type="ECO:0000305" key="4"/>
<reference key="1">
    <citation type="journal article" date="2002" name="Nature">
        <title>The genome sequence of Schizosaccharomyces pombe.</title>
        <authorList>
            <person name="Wood V."/>
            <person name="Gwilliam R."/>
            <person name="Rajandream M.A."/>
            <person name="Lyne M.H."/>
            <person name="Lyne R."/>
            <person name="Stewart A."/>
            <person name="Sgouros J.G."/>
            <person name="Peat N."/>
            <person name="Hayles J."/>
            <person name="Baker S.G."/>
            <person name="Basham D."/>
            <person name="Bowman S."/>
            <person name="Brooks K."/>
            <person name="Brown D."/>
            <person name="Brown S."/>
            <person name="Chillingworth T."/>
            <person name="Churcher C.M."/>
            <person name="Collins M."/>
            <person name="Connor R."/>
            <person name="Cronin A."/>
            <person name="Davis P."/>
            <person name="Feltwell T."/>
            <person name="Fraser A."/>
            <person name="Gentles S."/>
            <person name="Goble A."/>
            <person name="Hamlin N."/>
            <person name="Harris D.E."/>
            <person name="Hidalgo J."/>
            <person name="Hodgson G."/>
            <person name="Holroyd S."/>
            <person name="Hornsby T."/>
            <person name="Howarth S."/>
            <person name="Huckle E.J."/>
            <person name="Hunt S."/>
            <person name="Jagels K."/>
            <person name="James K.D."/>
            <person name="Jones L."/>
            <person name="Jones M."/>
            <person name="Leather S."/>
            <person name="McDonald S."/>
            <person name="McLean J."/>
            <person name="Mooney P."/>
            <person name="Moule S."/>
            <person name="Mungall K.L."/>
            <person name="Murphy L.D."/>
            <person name="Niblett D."/>
            <person name="Odell C."/>
            <person name="Oliver K."/>
            <person name="O'Neil S."/>
            <person name="Pearson D."/>
            <person name="Quail M.A."/>
            <person name="Rabbinowitsch E."/>
            <person name="Rutherford K.M."/>
            <person name="Rutter S."/>
            <person name="Saunders D."/>
            <person name="Seeger K."/>
            <person name="Sharp S."/>
            <person name="Skelton J."/>
            <person name="Simmonds M.N."/>
            <person name="Squares R."/>
            <person name="Squares S."/>
            <person name="Stevens K."/>
            <person name="Taylor K."/>
            <person name="Taylor R.G."/>
            <person name="Tivey A."/>
            <person name="Walsh S.V."/>
            <person name="Warren T."/>
            <person name="Whitehead S."/>
            <person name="Woodward J.R."/>
            <person name="Volckaert G."/>
            <person name="Aert R."/>
            <person name="Robben J."/>
            <person name="Grymonprez B."/>
            <person name="Weltjens I."/>
            <person name="Vanstreels E."/>
            <person name="Rieger M."/>
            <person name="Schaefer M."/>
            <person name="Mueller-Auer S."/>
            <person name="Gabel C."/>
            <person name="Fuchs M."/>
            <person name="Duesterhoeft A."/>
            <person name="Fritzc C."/>
            <person name="Holzer E."/>
            <person name="Moestl D."/>
            <person name="Hilbert H."/>
            <person name="Borzym K."/>
            <person name="Langer I."/>
            <person name="Beck A."/>
            <person name="Lehrach H."/>
            <person name="Reinhardt R."/>
            <person name="Pohl T.M."/>
            <person name="Eger P."/>
            <person name="Zimmermann W."/>
            <person name="Wedler H."/>
            <person name="Wambutt R."/>
            <person name="Purnelle B."/>
            <person name="Goffeau A."/>
            <person name="Cadieu E."/>
            <person name="Dreano S."/>
            <person name="Gloux S."/>
            <person name="Lelaure V."/>
            <person name="Mottier S."/>
            <person name="Galibert F."/>
            <person name="Aves S.J."/>
            <person name="Xiang Z."/>
            <person name="Hunt C."/>
            <person name="Moore K."/>
            <person name="Hurst S.M."/>
            <person name="Lucas M."/>
            <person name="Rochet M."/>
            <person name="Gaillardin C."/>
            <person name="Tallada V.A."/>
            <person name="Garzon A."/>
            <person name="Thode G."/>
            <person name="Daga R.R."/>
            <person name="Cruzado L."/>
            <person name="Jimenez J."/>
            <person name="Sanchez M."/>
            <person name="del Rey F."/>
            <person name="Benito J."/>
            <person name="Dominguez A."/>
            <person name="Revuelta J.L."/>
            <person name="Moreno S."/>
            <person name="Armstrong J."/>
            <person name="Forsburg S.L."/>
            <person name="Cerutti L."/>
            <person name="Lowe T."/>
            <person name="McCombie W.R."/>
            <person name="Paulsen I."/>
            <person name="Potashkin J."/>
            <person name="Shpakovski G.V."/>
            <person name="Ussery D."/>
            <person name="Barrell B.G."/>
            <person name="Nurse P."/>
        </authorList>
    </citation>
    <scope>NUCLEOTIDE SEQUENCE [LARGE SCALE GENOMIC DNA]</scope>
    <source>
        <strain>972 / ATCC 24843</strain>
    </source>
</reference>
<accession>Q9P7E9</accession>
<accession>O13720</accession>
<name>YDZF_SCHPO</name>
<keyword id="KW-0031">Aminopeptidase</keyword>
<keyword id="KW-0325">Glycoprotein</keyword>
<keyword id="KW-0378">Hydrolase</keyword>
<keyword id="KW-0472">Membrane</keyword>
<keyword id="KW-0645">Protease</keyword>
<keyword id="KW-1185">Reference proteome</keyword>
<keyword id="KW-0720">Serine protease</keyword>
<keyword id="KW-0735">Signal-anchor</keyword>
<keyword id="KW-0812">Transmembrane</keyword>
<keyword id="KW-1133">Transmembrane helix</keyword>
<keyword id="KW-0926">Vacuole</keyword>
<protein>
    <recommendedName>
        <fullName>Putative dipeptidyl aminopeptidase C14C4.15c</fullName>
        <ecNumber>3.4.14.-</ecNumber>
    </recommendedName>
</protein>
<gene>
    <name type="ORF">SPAC14C4.15c</name>
    <name type="ORF">SPAPJ760.01c</name>
</gene>
<feature type="chain" id="PRO_0000122423" description="Putative dipeptidyl aminopeptidase C14C4.15c">
    <location>
        <begin position="1"/>
        <end position="853"/>
    </location>
</feature>
<feature type="topological domain" description="Cytoplasmic" evidence="2">
    <location>
        <begin position="1"/>
        <end position="65"/>
    </location>
</feature>
<feature type="transmembrane region" description="Helical; Signal-anchor for type II membrane protein" evidence="2">
    <location>
        <begin position="66"/>
        <end position="86"/>
    </location>
</feature>
<feature type="topological domain" description="Lumenal" evidence="2">
    <location>
        <begin position="87"/>
        <end position="853"/>
    </location>
</feature>
<feature type="region of interest" description="Disordered" evidence="3">
    <location>
        <begin position="1"/>
        <end position="26"/>
    </location>
</feature>
<feature type="compositionally biased region" description="Basic residues" evidence="3">
    <location>
        <begin position="15"/>
        <end position="25"/>
    </location>
</feature>
<feature type="active site" description="Charge relay system" evidence="1">
    <location>
        <position position="719"/>
    </location>
</feature>
<feature type="active site" description="Charge relay system" evidence="1">
    <location>
        <position position="795"/>
    </location>
</feature>
<feature type="active site" description="Charge relay system" evidence="1">
    <location>
        <position position="828"/>
    </location>
</feature>
<feature type="glycosylation site" description="N-linked (GlcNAc...) asparagine" evidence="2">
    <location>
        <position position="96"/>
    </location>
</feature>
<feature type="glycosylation site" description="N-linked (GlcNAc...) asparagine" evidence="2">
    <location>
        <position position="102"/>
    </location>
</feature>
<feature type="glycosylation site" description="N-linked (GlcNAc...) asparagine" evidence="2">
    <location>
        <position position="472"/>
    </location>
</feature>
<feature type="glycosylation site" description="N-linked (GlcNAc...) asparagine" evidence="2">
    <location>
        <position position="483"/>
    </location>
</feature>
<feature type="glycosylation site" description="N-linked (GlcNAc...) asparagine" evidence="2">
    <location>
        <position position="613"/>
    </location>
</feature>
<proteinExistence type="inferred from homology"/>